<name>ECM14_PENRW</name>
<dbReference type="EMBL" id="AM920428">
    <property type="protein sequence ID" value="CAP91446.1"/>
    <property type="molecule type" value="Genomic_DNA"/>
</dbReference>
<dbReference type="RefSeq" id="XP_002558814.1">
    <property type="nucleotide sequence ID" value="XM_002558768.1"/>
</dbReference>
<dbReference type="SMR" id="B6H233"/>
<dbReference type="STRING" id="500485.B6H233"/>
<dbReference type="GlyCosmos" id="B6H233">
    <property type="glycosylation" value="1 site, No reported glycans"/>
</dbReference>
<dbReference type="GeneID" id="8313477"/>
<dbReference type="KEGG" id="pcs:N7525_003773"/>
<dbReference type="VEuPathDB" id="FungiDB:PCH_Pc13g03770"/>
<dbReference type="eggNOG" id="KOG2650">
    <property type="taxonomic scope" value="Eukaryota"/>
</dbReference>
<dbReference type="HOGENOM" id="CLU_019326_1_0_1"/>
<dbReference type="OMA" id="WFYHQLH"/>
<dbReference type="OrthoDB" id="3626597at2759"/>
<dbReference type="BioCyc" id="PCHR:PC13G03770-MONOMER"/>
<dbReference type="Proteomes" id="UP000000724">
    <property type="component" value="Contig Pc00c13"/>
</dbReference>
<dbReference type="GO" id="GO:0005576">
    <property type="term" value="C:extracellular region"/>
    <property type="evidence" value="ECO:0007669"/>
    <property type="project" value="UniProtKB-SubCell"/>
</dbReference>
<dbReference type="GO" id="GO:0005773">
    <property type="term" value="C:vacuole"/>
    <property type="evidence" value="ECO:0007669"/>
    <property type="project" value="UniProtKB-SubCell"/>
</dbReference>
<dbReference type="GO" id="GO:0008270">
    <property type="term" value="F:zinc ion binding"/>
    <property type="evidence" value="ECO:0007669"/>
    <property type="project" value="InterPro"/>
</dbReference>
<dbReference type="GO" id="GO:0071555">
    <property type="term" value="P:cell wall organization"/>
    <property type="evidence" value="ECO:0007669"/>
    <property type="project" value="UniProtKB-KW"/>
</dbReference>
<dbReference type="GO" id="GO:0006508">
    <property type="term" value="P:proteolysis"/>
    <property type="evidence" value="ECO:0007669"/>
    <property type="project" value="InterPro"/>
</dbReference>
<dbReference type="CDD" id="cd03860">
    <property type="entry name" value="M14_CP_A-B_like"/>
    <property type="match status" value="1"/>
</dbReference>
<dbReference type="FunFam" id="3.40.630.10:FF:000060">
    <property type="entry name" value="Putative metallocarboxypeptidase ecm14"/>
    <property type="match status" value="1"/>
</dbReference>
<dbReference type="Gene3D" id="3.40.630.10">
    <property type="entry name" value="Zn peptidases"/>
    <property type="match status" value="1"/>
</dbReference>
<dbReference type="InterPro" id="IPR000834">
    <property type="entry name" value="Peptidase_M14"/>
</dbReference>
<dbReference type="PANTHER" id="PTHR11705:SF147">
    <property type="entry name" value="INACTIVE METALLOCARBOXYPEPTIDASE ECM14"/>
    <property type="match status" value="1"/>
</dbReference>
<dbReference type="PANTHER" id="PTHR11705">
    <property type="entry name" value="PROTEASE FAMILY M14 CARBOXYPEPTIDASE A,B"/>
    <property type="match status" value="1"/>
</dbReference>
<dbReference type="Pfam" id="PF00246">
    <property type="entry name" value="Peptidase_M14"/>
    <property type="match status" value="1"/>
</dbReference>
<dbReference type="PRINTS" id="PR00765">
    <property type="entry name" value="CRBOXYPTASEA"/>
</dbReference>
<dbReference type="SMART" id="SM00631">
    <property type="entry name" value="Zn_pept"/>
    <property type="match status" value="1"/>
</dbReference>
<dbReference type="SUPFAM" id="SSF53187">
    <property type="entry name" value="Zn-dependent exopeptidases"/>
    <property type="match status" value="1"/>
</dbReference>
<dbReference type="PROSITE" id="PS00132">
    <property type="entry name" value="CARBOXYPEPT_ZN_1"/>
    <property type="match status" value="1"/>
</dbReference>
<dbReference type="PROSITE" id="PS52035">
    <property type="entry name" value="PEPTIDASE_M14"/>
    <property type="match status" value="1"/>
</dbReference>
<gene>
    <name type="primary">ecm14</name>
    <name type="ORF">Pc13g03770</name>
</gene>
<protein>
    <recommendedName>
        <fullName evidence="6">Inactive metallocarboxypeptidase ecm14</fullName>
    </recommendedName>
</protein>
<feature type="signal peptide" evidence="4">
    <location>
        <begin position="1"/>
        <end position="19"/>
    </location>
</feature>
<feature type="propeptide" id="PRO_0000453249" evidence="3">
    <location>
        <begin position="20"/>
        <end position="159"/>
    </location>
</feature>
<feature type="chain" id="PRO_5000408934" description="Inactive metallocarboxypeptidase ecm14">
    <location>
        <begin position="160"/>
        <end position="522"/>
    </location>
</feature>
<feature type="domain" description="Peptidase M14" evidence="5">
    <location>
        <begin position="187"/>
        <end position="501"/>
    </location>
</feature>
<feature type="binding site" evidence="1">
    <location>
        <begin position="251"/>
        <end position="254"/>
    </location>
    <ligand>
        <name>substrate</name>
    </ligand>
</feature>
<feature type="binding site" evidence="5">
    <location>
        <position position="251"/>
    </location>
    <ligand>
        <name>Zn(2+)</name>
        <dbReference type="ChEBI" id="CHEBI:29105"/>
        <note>catalytic</note>
    </ligand>
</feature>
<feature type="binding site" evidence="5">
    <location>
        <position position="254"/>
    </location>
    <ligand>
        <name>Zn(2+)</name>
        <dbReference type="ChEBI" id="CHEBI:29105"/>
        <note>catalytic</note>
    </ligand>
</feature>
<feature type="binding site" evidence="1">
    <location>
        <position position="309"/>
    </location>
    <ligand>
        <name>substrate</name>
    </ligand>
</feature>
<feature type="binding site" evidence="1">
    <location>
        <begin position="326"/>
        <end position="327"/>
    </location>
    <ligand>
        <name>substrate</name>
    </ligand>
</feature>
<feature type="binding site" evidence="5">
    <location>
        <position position="383"/>
    </location>
    <ligand>
        <name>Zn(2+)</name>
        <dbReference type="ChEBI" id="CHEBI:29105"/>
        <note>catalytic</note>
    </ligand>
</feature>
<feature type="binding site" evidence="1">
    <location>
        <begin position="384"/>
        <end position="385"/>
    </location>
    <ligand>
        <name>substrate</name>
    </ligand>
</feature>
<feature type="glycosylation site" description="N-linked (GlcNAc...) asparagine" evidence="4">
    <location>
        <position position="367"/>
    </location>
</feature>
<feature type="disulfide bond" evidence="2">
    <location>
        <begin position="320"/>
        <end position="343"/>
    </location>
</feature>
<keyword id="KW-0961">Cell wall biogenesis/degradation</keyword>
<keyword id="KW-1015">Disulfide bond</keyword>
<keyword id="KW-0325">Glycoprotein</keyword>
<keyword id="KW-0479">Metal-binding</keyword>
<keyword id="KW-1185">Reference proteome</keyword>
<keyword id="KW-0964">Secreted</keyword>
<keyword id="KW-0732">Signal</keyword>
<keyword id="KW-0926">Vacuole</keyword>
<keyword id="KW-0862">Zinc</keyword>
<proteinExistence type="inferred from homology"/>
<organism>
    <name type="scientific">Penicillium rubens (strain ATCC 28089 / DSM 1075 / NRRL 1951 / Wisconsin 54-1255)</name>
    <name type="common">Penicillium chrysogenum</name>
    <dbReference type="NCBI Taxonomy" id="500485"/>
    <lineage>
        <taxon>Eukaryota</taxon>
        <taxon>Fungi</taxon>
        <taxon>Dikarya</taxon>
        <taxon>Ascomycota</taxon>
        <taxon>Pezizomycotina</taxon>
        <taxon>Eurotiomycetes</taxon>
        <taxon>Eurotiomycetidae</taxon>
        <taxon>Eurotiales</taxon>
        <taxon>Aspergillaceae</taxon>
        <taxon>Penicillium</taxon>
        <taxon>Penicillium chrysogenum species complex</taxon>
    </lineage>
</organism>
<accession>B6H233</accession>
<sequence>MRLFSPILVASTLIPLISAVPAGSSITPPPPLQPSYFTHSSPRPWARLRDWIIGSIWDIDHKHRSSKHSSPPSNIHDRYGSDVVLRFHLRQPDEAEALASASQVLFLDIWAITSEFVDIRLADDMIPSLLDLLPLTLRTSYTPLMDNLADEIYASYPSRHRSDSDFKSGLASAELKTISNCDLFFQEYQPLSVITQWMRLMASMFSSHVRMTSVGVSYEGRDIPALRLGTSHNTETTSGPRKTILIVGGSHAREWISTSTVTYVAYSLITHYGYSPAVTRLLHEYDWVLIPTINPDGYVYSWESDRLWRKNRQPTGLPLCPGVDLDRAWDYEWDGESTRSNPCSENYAGAEPFEALESQRLAQWAQNQTAHGGAEIVGFLDLHSYSQQILYPYSYSCSSVPPTLESLEELALGLAKAIRQTSHESYDVTSACEGILTQGAAAGITSGGSALDWFYHKLHTRFSYQIKLRDRGSYGFLLPSEHIVPTGKEIFRALLTFGKFVWGEEASDISLEDMTGDQIPLN</sequence>
<reference key="1">
    <citation type="journal article" date="2008" name="Nat. Biotechnol.">
        <title>Genome sequencing and analysis of the filamentous fungus Penicillium chrysogenum.</title>
        <authorList>
            <person name="van den Berg M.A."/>
            <person name="Albang R."/>
            <person name="Albermann K."/>
            <person name="Badger J.H."/>
            <person name="Daran J.-M."/>
            <person name="Driessen A.J.M."/>
            <person name="Garcia-Estrada C."/>
            <person name="Fedorova N.D."/>
            <person name="Harris D.M."/>
            <person name="Heijne W.H.M."/>
            <person name="Joardar V.S."/>
            <person name="Kiel J.A.K.W."/>
            <person name="Kovalchuk A."/>
            <person name="Martin J.F."/>
            <person name="Nierman W.C."/>
            <person name="Nijland J.G."/>
            <person name="Pronk J.T."/>
            <person name="Roubos J.A."/>
            <person name="van der Klei I.J."/>
            <person name="van Peij N.N.M.E."/>
            <person name="Veenhuis M."/>
            <person name="von Doehren H."/>
            <person name="Wagner C."/>
            <person name="Wortman J.R."/>
            <person name="Bovenberg R.A.L."/>
        </authorList>
    </citation>
    <scope>NUCLEOTIDE SEQUENCE [LARGE SCALE GENOMIC DNA]</scope>
    <source>
        <strain>ATCC 28089 / DSM 1075 / NRRL 1951 / Wisconsin 54-1255</strain>
    </source>
</reference>
<evidence type="ECO:0000250" key="1">
    <source>
        <dbReference type="UniProtKB" id="P00730"/>
    </source>
</evidence>
<evidence type="ECO:0000250" key="2">
    <source>
        <dbReference type="UniProtKB" id="P15085"/>
    </source>
</evidence>
<evidence type="ECO:0000250" key="3">
    <source>
        <dbReference type="UniProtKB" id="P38836"/>
    </source>
</evidence>
<evidence type="ECO:0000255" key="4"/>
<evidence type="ECO:0000255" key="5">
    <source>
        <dbReference type="PROSITE-ProRule" id="PRU01379"/>
    </source>
</evidence>
<evidence type="ECO:0000305" key="6"/>
<comment type="function">
    <text evidence="3">Inactive carboxypeptidase that may play a role in cell wall organization and biogenesis.</text>
</comment>
<comment type="cofactor">
    <cofactor evidence="1">
        <name>Zn(2+)</name>
        <dbReference type="ChEBI" id="CHEBI:29105"/>
    </cofactor>
    <text evidence="1">Binds 1 zinc ion per subunit.</text>
</comment>
<comment type="subcellular location">
    <subcellularLocation>
        <location evidence="3">Vacuole</location>
    </subcellularLocation>
    <subcellularLocation>
        <location evidence="3">Secreted</location>
    </subcellularLocation>
</comment>
<comment type="similarity">
    <text evidence="6">Belongs to the peptidase M14 family.</text>
</comment>
<comment type="caution">
    <text evidence="3">Lacks the conserved Glu residue in position 467 essential for carbopeptidase activity. The mature form lacks catalytic activity towards synthetic peptide substrates.</text>
</comment>